<protein>
    <recommendedName>
        <fullName>Uncharacterized protein YggE</fullName>
    </recommendedName>
</protein>
<reference key="1">
    <citation type="journal article" date="2001" name="Nature">
        <title>Genome sequence of enterohaemorrhagic Escherichia coli O157:H7.</title>
        <authorList>
            <person name="Perna N.T."/>
            <person name="Plunkett G. III"/>
            <person name="Burland V."/>
            <person name="Mau B."/>
            <person name="Glasner J.D."/>
            <person name="Rose D.J."/>
            <person name="Mayhew G.F."/>
            <person name="Evans P.S."/>
            <person name="Gregor J."/>
            <person name="Kirkpatrick H.A."/>
            <person name="Posfai G."/>
            <person name="Hackett J."/>
            <person name="Klink S."/>
            <person name="Boutin A."/>
            <person name="Shao Y."/>
            <person name="Miller L."/>
            <person name="Grotbeck E.J."/>
            <person name="Davis N.W."/>
            <person name="Lim A."/>
            <person name="Dimalanta E.T."/>
            <person name="Potamousis K."/>
            <person name="Apodaca J."/>
            <person name="Anantharaman T.S."/>
            <person name="Lin J."/>
            <person name="Yen G."/>
            <person name="Schwartz D.C."/>
            <person name="Welch R.A."/>
            <person name="Blattner F.R."/>
        </authorList>
    </citation>
    <scope>NUCLEOTIDE SEQUENCE [LARGE SCALE GENOMIC DNA]</scope>
    <source>
        <strain>O157:H7 / EDL933 / ATCC 700927 / EHEC</strain>
    </source>
</reference>
<reference key="2">
    <citation type="journal article" date="2001" name="DNA Res.">
        <title>Complete genome sequence of enterohemorrhagic Escherichia coli O157:H7 and genomic comparison with a laboratory strain K-12.</title>
        <authorList>
            <person name="Hayashi T."/>
            <person name="Makino K."/>
            <person name="Ohnishi M."/>
            <person name="Kurokawa K."/>
            <person name="Ishii K."/>
            <person name="Yokoyama K."/>
            <person name="Han C.-G."/>
            <person name="Ohtsubo E."/>
            <person name="Nakayama K."/>
            <person name="Murata T."/>
            <person name="Tanaka M."/>
            <person name="Tobe T."/>
            <person name="Iida T."/>
            <person name="Takami H."/>
            <person name="Honda T."/>
            <person name="Sasakawa C."/>
            <person name="Ogasawara N."/>
            <person name="Yasunaga T."/>
            <person name="Kuhara S."/>
            <person name="Shiba T."/>
            <person name="Hattori M."/>
            <person name="Shinagawa H."/>
        </authorList>
    </citation>
    <scope>NUCLEOTIDE SEQUENCE [LARGE SCALE GENOMIC DNA]</scope>
    <source>
        <strain>O157:H7 / Sakai / RIMD 0509952 / EHEC</strain>
    </source>
</reference>
<proteinExistence type="predicted"/>
<gene>
    <name type="primary">yggE</name>
    <name type="ordered locus">Z4259</name>
    <name type="ordered locus">ECs3793</name>
</gene>
<name>YGGE_ECO57</name>
<organism>
    <name type="scientific">Escherichia coli O157:H7</name>
    <dbReference type="NCBI Taxonomy" id="83334"/>
    <lineage>
        <taxon>Bacteria</taxon>
        <taxon>Pseudomonadati</taxon>
        <taxon>Pseudomonadota</taxon>
        <taxon>Gammaproteobacteria</taxon>
        <taxon>Enterobacterales</taxon>
        <taxon>Enterobacteriaceae</taxon>
        <taxon>Escherichia</taxon>
    </lineage>
</organism>
<feature type="chain" id="PRO_0000169365" description="Uncharacterized protein YggE">
    <location>
        <begin position="1"/>
        <end position="246"/>
    </location>
</feature>
<sequence>MKFKVIALAALMGISGMAAQANELPDGPHIVTSGTASVDAVPDIATLAIEVNVAAKDAATAKKQADERVAQYISFLELNQIAKKDISSANLRTQPDYDYQDGKSILKGYRAVRTVEVTLRQLDKLNSLLDGALKAGLNEIRSVSLGVAQPDAYKDKARKAAIDNAIHQAQELANGFHRKLGPVYSVRYHVSNYQPSPMVRMMKADAAPVSAQETYEQAAIQFDDQVDVVFQLEPVDQQPAKTPAAQ</sequence>
<keyword id="KW-1185">Reference proteome</keyword>
<dbReference type="EMBL" id="AE005174">
    <property type="protein sequence ID" value="AAG58048.1"/>
    <property type="molecule type" value="Genomic_DNA"/>
</dbReference>
<dbReference type="EMBL" id="BA000007">
    <property type="protein sequence ID" value="BAB37216.1"/>
    <property type="molecule type" value="Genomic_DNA"/>
</dbReference>
<dbReference type="PIR" id="A98103">
    <property type="entry name" value="A98103"/>
</dbReference>
<dbReference type="PIR" id="D85948">
    <property type="entry name" value="D85948"/>
</dbReference>
<dbReference type="RefSeq" id="NP_311820.1">
    <property type="nucleotide sequence ID" value="NC_002695.1"/>
</dbReference>
<dbReference type="RefSeq" id="WP_000669834.1">
    <property type="nucleotide sequence ID" value="NZ_VOAI01000003.1"/>
</dbReference>
<dbReference type="SMR" id="P0ADS7"/>
<dbReference type="STRING" id="155864.Z4259"/>
<dbReference type="GeneID" id="916387"/>
<dbReference type="KEGG" id="ece:Z4259"/>
<dbReference type="KEGG" id="ecs:ECs_3793"/>
<dbReference type="PATRIC" id="fig|386585.9.peg.3959"/>
<dbReference type="eggNOG" id="COG2968">
    <property type="taxonomic scope" value="Bacteria"/>
</dbReference>
<dbReference type="HOGENOM" id="CLU_080344_3_0_6"/>
<dbReference type="OMA" id="MNQTNER"/>
<dbReference type="Proteomes" id="UP000000558">
    <property type="component" value="Chromosome"/>
</dbReference>
<dbReference type="Proteomes" id="UP000002519">
    <property type="component" value="Chromosome"/>
</dbReference>
<dbReference type="GO" id="GO:0006974">
    <property type="term" value="P:DNA damage response"/>
    <property type="evidence" value="ECO:0007669"/>
    <property type="project" value="TreeGrafter"/>
</dbReference>
<dbReference type="FunFam" id="3.30.110.170:FF:000001">
    <property type="entry name" value="Oxidative stress defense protein"/>
    <property type="match status" value="1"/>
</dbReference>
<dbReference type="FunFam" id="3.30.70.2970:FF:000001">
    <property type="entry name" value="Oxidative stress defense protein"/>
    <property type="match status" value="1"/>
</dbReference>
<dbReference type="Gene3D" id="3.30.110.170">
    <property type="entry name" value="Protein of unknown function (DUF541), domain 1"/>
    <property type="match status" value="1"/>
</dbReference>
<dbReference type="Gene3D" id="3.30.70.2970">
    <property type="entry name" value="Protein of unknown function (DUF541), domain 2"/>
    <property type="match status" value="1"/>
</dbReference>
<dbReference type="InterPro" id="IPR052022">
    <property type="entry name" value="26kDa_periplasmic_antigen"/>
</dbReference>
<dbReference type="InterPro" id="IPR007497">
    <property type="entry name" value="SIMPL/DUF541"/>
</dbReference>
<dbReference type="NCBIfam" id="NF008299">
    <property type="entry name" value="PRK11087.1"/>
    <property type="match status" value="1"/>
</dbReference>
<dbReference type="PANTHER" id="PTHR34387:SF1">
    <property type="entry name" value="PERIPLASMIC IMMUNOGENIC PROTEIN"/>
    <property type="match status" value="1"/>
</dbReference>
<dbReference type="PANTHER" id="PTHR34387">
    <property type="entry name" value="SLR1258 PROTEIN"/>
    <property type="match status" value="1"/>
</dbReference>
<dbReference type="Pfam" id="PF04402">
    <property type="entry name" value="SIMPL"/>
    <property type="match status" value="1"/>
</dbReference>
<accession>P0ADS7</accession>
<accession>P11668</accession>